<organism>
    <name type="scientific">Acinetobacter calcoaceticus</name>
    <dbReference type="NCBI Taxonomy" id="471"/>
    <lineage>
        <taxon>Bacteria</taxon>
        <taxon>Pseudomonadati</taxon>
        <taxon>Pseudomonadota</taxon>
        <taxon>Gammaproteobacteria</taxon>
        <taxon>Moraxellales</taxon>
        <taxon>Moraxellaceae</taxon>
        <taxon>Acinetobacter</taxon>
        <taxon>Acinetobacter calcoaceticus/baumannii complex</taxon>
    </lineage>
</organism>
<keyword id="KW-0004">4Fe-4S</keyword>
<keyword id="KW-0408">Iron</keyword>
<keyword id="KW-0411">Iron-sulfur</keyword>
<keyword id="KW-0479">Metal-binding</keyword>
<keyword id="KW-0560">Oxidoreductase</keyword>
<keyword id="KW-0884">PQQ biosynthesis</keyword>
<keyword id="KW-0949">S-adenosyl-L-methionine</keyword>
<sequence>MTEGVGLPLWLLAELTYRCPLQCPYCSNPLDYAQHKNELTTQEWFDVFDQARQMGAVQLGFSGGEPLVRQDLEQLVAHAHQQGFYTNLITSGMGLTEQRIADLKQAGLDHIQVSFQASDPVVNDALAGSKHAFEQKYEMCRLVKKYDYPMVLNFVIHRHNIDQIEQIIELCLELNADTVELAICQFYGWAFLNRQGLLPTQEQLTRAERITNEYREKLKAQNHPCKLIFVVPDYYEERPKACMNGWGKIFFTVAPDGMALPCHAARQLPISFPNVREHKLSDIWYKSTGFNHFRGDAWMPEGCRSCPDKDRDFGGCRCQAYMLTGDAANADPVCGKSPYHQMIEQARAESQLVAPLQNLVFRNSRNSKSLSATQNIPVHTITDI</sequence>
<dbReference type="EC" id="1.21.98.4"/>
<dbReference type="EMBL" id="X06452">
    <property type="protein sequence ID" value="CAA29756.1"/>
    <property type="molecule type" value="Genomic_DNA"/>
</dbReference>
<dbReference type="EMBL" id="X06452">
    <property type="protein sequence ID" value="CAB89080.1"/>
    <property type="status" value="ALT_INIT"/>
    <property type="molecule type" value="Genomic_DNA"/>
</dbReference>
<dbReference type="PIR" id="F32252">
    <property type="entry name" value="F32252"/>
</dbReference>
<dbReference type="SMR" id="P07782"/>
<dbReference type="STRING" id="471.BUM88_09600"/>
<dbReference type="UniPathway" id="UPA00539"/>
<dbReference type="GO" id="GO:0051539">
    <property type="term" value="F:4 iron, 4 sulfur cluster binding"/>
    <property type="evidence" value="ECO:0007669"/>
    <property type="project" value="UniProtKB-KW"/>
</dbReference>
<dbReference type="GO" id="GO:0009975">
    <property type="term" value="F:cyclase activity"/>
    <property type="evidence" value="ECO:0007669"/>
    <property type="project" value="UniProtKB-UniRule"/>
</dbReference>
<dbReference type="GO" id="GO:0005506">
    <property type="term" value="F:iron ion binding"/>
    <property type="evidence" value="ECO:0007669"/>
    <property type="project" value="UniProtKB-UniRule"/>
</dbReference>
<dbReference type="GO" id="GO:0016491">
    <property type="term" value="F:oxidoreductase activity"/>
    <property type="evidence" value="ECO:0007669"/>
    <property type="project" value="UniProtKB-KW"/>
</dbReference>
<dbReference type="GO" id="GO:1904047">
    <property type="term" value="F:S-adenosyl-L-methionine binding"/>
    <property type="evidence" value="ECO:0007669"/>
    <property type="project" value="UniProtKB-UniRule"/>
</dbReference>
<dbReference type="GO" id="GO:0018189">
    <property type="term" value="P:pyrroloquinoline quinone biosynthetic process"/>
    <property type="evidence" value="ECO:0007669"/>
    <property type="project" value="UniProtKB-UniRule"/>
</dbReference>
<dbReference type="CDD" id="cd01335">
    <property type="entry name" value="Radical_SAM"/>
    <property type="match status" value="1"/>
</dbReference>
<dbReference type="CDD" id="cd21119">
    <property type="entry name" value="SPASM_PqqE"/>
    <property type="match status" value="1"/>
</dbReference>
<dbReference type="Gene3D" id="3.20.20.70">
    <property type="entry name" value="Aldolase class I"/>
    <property type="match status" value="1"/>
</dbReference>
<dbReference type="HAMAP" id="MF_00660">
    <property type="entry name" value="PqqE"/>
    <property type="match status" value="1"/>
</dbReference>
<dbReference type="InterPro" id="IPR023885">
    <property type="entry name" value="4Fe4S-binding_SPASM_dom"/>
</dbReference>
<dbReference type="InterPro" id="IPR013785">
    <property type="entry name" value="Aldolase_TIM"/>
</dbReference>
<dbReference type="InterPro" id="IPR006638">
    <property type="entry name" value="Elp3/MiaA/NifB-like_rSAM"/>
</dbReference>
<dbReference type="InterPro" id="IPR000385">
    <property type="entry name" value="MoaA_NifB_PqqE_Fe-S-bd_CS"/>
</dbReference>
<dbReference type="InterPro" id="IPR011843">
    <property type="entry name" value="PQQ_synth_PqqE_bac"/>
</dbReference>
<dbReference type="InterPro" id="IPR017200">
    <property type="entry name" value="PqqE-like"/>
</dbReference>
<dbReference type="InterPro" id="IPR050377">
    <property type="entry name" value="Radical_SAM_PqqE_MftC-like"/>
</dbReference>
<dbReference type="InterPro" id="IPR007197">
    <property type="entry name" value="rSAM"/>
</dbReference>
<dbReference type="NCBIfam" id="TIGR02109">
    <property type="entry name" value="PQQ_syn_pqqE"/>
    <property type="match status" value="1"/>
</dbReference>
<dbReference type="NCBIfam" id="TIGR04085">
    <property type="entry name" value="rSAM_more_4Fe4S"/>
    <property type="match status" value="1"/>
</dbReference>
<dbReference type="PANTHER" id="PTHR11228:SF7">
    <property type="entry name" value="PQQA PEPTIDE CYCLASE"/>
    <property type="match status" value="1"/>
</dbReference>
<dbReference type="PANTHER" id="PTHR11228">
    <property type="entry name" value="RADICAL SAM DOMAIN PROTEIN"/>
    <property type="match status" value="1"/>
</dbReference>
<dbReference type="Pfam" id="PF13353">
    <property type="entry name" value="Fer4_12"/>
    <property type="match status" value="1"/>
</dbReference>
<dbReference type="Pfam" id="PF04055">
    <property type="entry name" value="Radical_SAM"/>
    <property type="match status" value="1"/>
</dbReference>
<dbReference type="Pfam" id="PF13186">
    <property type="entry name" value="SPASM"/>
    <property type="match status" value="1"/>
</dbReference>
<dbReference type="PIRSF" id="PIRSF037420">
    <property type="entry name" value="PQQ_syn_pqqE"/>
    <property type="match status" value="1"/>
</dbReference>
<dbReference type="SFLD" id="SFLDF00280">
    <property type="entry name" value="coenzyme_PQQ_synthesis_protein"/>
    <property type="match status" value="1"/>
</dbReference>
<dbReference type="SFLD" id="SFLDG01067">
    <property type="entry name" value="SPASM/twitch_domain_containing"/>
    <property type="match status" value="1"/>
</dbReference>
<dbReference type="SMART" id="SM00729">
    <property type="entry name" value="Elp3"/>
    <property type="match status" value="1"/>
</dbReference>
<dbReference type="SUPFAM" id="SSF102114">
    <property type="entry name" value="Radical SAM enzymes"/>
    <property type="match status" value="1"/>
</dbReference>
<dbReference type="PROSITE" id="PS01305">
    <property type="entry name" value="MOAA_NIFB_PQQE"/>
    <property type="match status" value="1"/>
</dbReference>
<dbReference type="PROSITE" id="PS51918">
    <property type="entry name" value="RADICAL_SAM"/>
    <property type="match status" value="1"/>
</dbReference>
<feature type="chain" id="PRO_0000219934" description="PqqA peptide cyclase">
    <location>
        <begin position="1"/>
        <end position="384"/>
    </location>
</feature>
<feature type="domain" description="Radical SAM core" evidence="2">
    <location>
        <begin position="5"/>
        <end position="220"/>
    </location>
</feature>
<feature type="binding site" evidence="1">
    <location>
        <position position="19"/>
    </location>
    <ligand>
        <name>[4Fe-4S] cluster</name>
        <dbReference type="ChEBI" id="CHEBI:49883"/>
        <note>4Fe-4S-S-AdoMet</note>
    </ligand>
</feature>
<feature type="binding site" evidence="1">
    <location>
        <position position="23"/>
    </location>
    <ligand>
        <name>[4Fe-4S] cluster</name>
        <dbReference type="ChEBI" id="CHEBI:49883"/>
        <note>4Fe-4S-S-AdoMet</note>
    </ligand>
</feature>
<feature type="binding site" evidence="1">
    <location>
        <position position="26"/>
    </location>
    <ligand>
        <name>[4Fe-4S] cluster</name>
        <dbReference type="ChEBI" id="CHEBI:49883"/>
        <note>4Fe-4S-S-AdoMet</note>
    </ligand>
</feature>
<comment type="function">
    <text>Catalyzes the cross-linking of a glutamate residue and a tyrosine residue in the PqqA protein as part of the biosynthesis of pyrroloquinoline quinone (PQQ).</text>
</comment>
<comment type="catalytic activity">
    <reaction>
        <text>[PQQ precursor protein] + S-adenosyl-L-methionine = E-Y cross-linked-[PQQ precursor protein] + 5'-deoxyadenosine + L-methionine + H(+)</text>
        <dbReference type="Rhea" id="RHEA:56836"/>
        <dbReference type="Rhea" id="RHEA-COMP:14800"/>
        <dbReference type="Rhea" id="RHEA-COMP:14801"/>
        <dbReference type="ChEBI" id="CHEBI:15378"/>
        <dbReference type="ChEBI" id="CHEBI:17319"/>
        <dbReference type="ChEBI" id="CHEBI:57844"/>
        <dbReference type="ChEBI" id="CHEBI:59789"/>
        <dbReference type="ChEBI" id="CHEBI:141026"/>
        <dbReference type="ChEBI" id="CHEBI:141027"/>
        <dbReference type="EC" id="1.21.98.4"/>
    </reaction>
</comment>
<comment type="cofactor">
    <cofactor evidence="1">
        <name>[4Fe-4S] cluster</name>
        <dbReference type="ChEBI" id="CHEBI:49883"/>
    </cofactor>
    <text evidence="1">Binds 1 [4Fe-4S] cluster. The cluster is coordinated with 3 cysteines and an exchangeable S-adenosyl-L-methionine.</text>
</comment>
<comment type="pathway">
    <text>Cofactor biosynthesis; pyrroloquinoline quinone biosynthesis.</text>
</comment>
<comment type="subunit">
    <text>Interacts with PqqD. The interaction is necessary for activity of PqqE.</text>
</comment>
<comment type="similarity">
    <text evidence="3">Belongs to the radical SAM superfamily. PqqE family.</text>
</comment>
<comment type="sequence caution" evidence="3">
    <conflict type="erroneous initiation">
        <sequence resource="EMBL-CDS" id="CAB89080"/>
    </conflict>
</comment>
<proteinExistence type="inferred from homology"/>
<gene>
    <name type="primary">pqqE</name>
    <name type="synonym">pqqIII</name>
</gene>
<accession>P07782</accession>
<accession>Q43987</accession>
<accession>Q9JN48</accession>
<protein>
    <recommendedName>
        <fullName>PqqA peptide cyclase</fullName>
        <ecNumber>1.21.98.4</ecNumber>
    </recommendedName>
    <alternativeName>
        <fullName>Coenzyme PQQ synthesis protein E</fullName>
    </alternativeName>
    <alternativeName>
        <fullName>Coenzyme PQQ synthesis protein III</fullName>
    </alternativeName>
    <alternativeName>
        <fullName>Pyrroloquinoline quinone biosynthesis protein E</fullName>
    </alternativeName>
</protein>
<reference key="1">
    <citation type="journal article" date="1989" name="J. Bacteriol.">
        <title>Acinetobacter calcoaceticus genes involved in biosynthesis of the coenzyme pyrrolo-quinoline-quinone: nucleotide sequence and expression in Escherichia coli K-12.</title>
        <authorList>
            <person name="Goosen N."/>
            <person name="Horsman H.P.A."/>
            <person name="Huinen R.G.M."/>
            <person name="van de Putte P."/>
        </authorList>
    </citation>
    <scope>NUCLEOTIDE SEQUENCE [GENOMIC DNA]</scope>
    <source>
        <strain>LMD 79.41</strain>
    </source>
</reference>
<name>PQQE_ACICA</name>
<evidence type="ECO:0000250" key="1"/>
<evidence type="ECO:0000255" key="2">
    <source>
        <dbReference type="PROSITE-ProRule" id="PRU01266"/>
    </source>
</evidence>
<evidence type="ECO:0000305" key="3"/>